<name>FUMC_BRUSU</name>
<feature type="chain" id="PRO_0000161262" description="Fumarate hydratase class II">
    <location>
        <begin position="1"/>
        <end position="463"/>
    </location>
</feature>
<feature type="active site" description="Proton donor/acceptor" evidence="1">
    <location>
        <position position="188"/>
    </location>
</feature>
<feature type="active site" evidence="1">
    <location>
        <position position="318"/>
    </location>
</feature>
<feature type="binding site" evidence="1">
    <location>
        <begin position="98"/>
        <end position="100"/>
    </location>
    <ligand>
        <name>substrate</name>
    </ligand>
</feature>
<feature type="binding site" description="in site B" evidence="1">
    <location>
        <begin position="129"/>
        <end position="132"/>
    </location>
    <ligand>
        <name>substrate</name>
    </ligand>
</feature>
<feature type="binding site" evidence="1">
    <location>
        <begin position="139"/>
        <end position="141"/>
    </location>
    <ligand>
        <name>substrate</name>
    </ligand>
</feature>
<feature type="binding site" evidence="1">
    <location>
        <position position="187"/>
    </location>
    <ligand>
        <name>substrate</name>
    </ligand>
</feature>
<feature type="binding site" evidence="1">
    <location>
        <position position="319"/>
    </location>
    <ligand>
        <name>substrate</name>
    </ligand>
</feature>
<feature type="binding site" evidence="1">
    <location>
        <begin position="324"/>
        <end position="326"/>
    </location>
    <ligand>
        <name>substrate</name>
    </ligand>
</feature>
<feature type="site" description="Important for catalytic activity" evidence="1">
    <location>
        <position position="331"/>
    </location>
</feature>
<evidence type="ECO:0000255" key="1">
    <source>
        <dbReference type="HAMAP-Rule" id="MF_00743"/>
    </source>
</evidence>
<dbReference type="EC" id="4.2.1.2" evidence="1"/>
<dbReference type="EMBL" id="AE014292">
    <property type="protein sequence ID" value="AAN33398.1"/>
    <property type="molecule type" value="Genomic_DNA"/>
</dbReference>
<dbReference type="EMBL" id="CP002998">
    <property type="protein sequence ID" value="AEM19675.1"/>
    <property type="molecule type" value="Genomic_DNA"/>
</dbReference>
<dbReference type="RefSeq" id="WP_002966390.1">
    <property type="nucleotide sequence ID" value="NZ_KN046805.1"/>
</dbReference>
<dbReference type="SMR" id="Q8FX90"/>
<dbReference type="GeneID" id="97535616"/>
<dbReference type="KEGG" id="bms:BRA0192"/>
<dbReference type="KEGG" id="bsi:BS1330_II0189"/>
<dbReference type="PATRIC" id="fig|204722.21.peg.2115"/>
<dbReference type="HOGENOM" id="CLU_021594_4_1_5"/>
<dbReference type="PhylomeDB" id="Q8FX90"/>
<dbReference type="UniPathway" id="UPA00223">
    <property type="reaction ID" value="UER01007"/>
</dbReference>
<dbReference type="Proteomes" id="UP000007104">
    <property type="component" value="Chromosome II"/>
</dbReference>
<dbReference type="GO" id="GO:0005737">
    <property type="term" value="C:cytoplasm"/>
    <property type="evidence" value="ECO:0007669"/>
    <property type="project" value="UniProtKB-SubCell"/>
</dbReference>
<dbReference type="GO" id="GO:0004333">
    <property type="term" value="F:fumarate hydratase activity"/>
    <property type="evidence" value="ECO:0007669"/>
    <property type="project" value="UniProtKB-UniRule"/>
</dbReference>
<dbReference type="GO" id="GO:0006106">
    <property type="term" value="P:fumarate metabolic process"/>
    <property type="evidence" value="ECO:0007669"/>
    <property type="project" value="InterPro"/>
</dbReference>
<dbReference type="GO" id="GO:0006108">
    <property type="term" value="P:malate metabolic process"/>
    <property type="evidence" value="ECO:0007669"/>
    <property type="project" value="TreeGrafter"/>
</dbReference>
<dbReference type="GO" id="GO:0006099">
    <property type="term" value="P:tricarboxylic acid cycle"/>
    <property type="evidence" value="ECO:0007669"/>
    <property type="project" value="UniProtKB-UniRule"/>
</dbReference>
<dbReference type="CDD" id="cd01362">
    <property type="entry name" value="Fumarase_classII"/>
    <property type="match status" value="1"/>
</dbReference>
<dbReference type="FunFam" id="1.10.40.30:FF:000002">
    <property type="entry name" value="Fumarate hydratase class II"/>
    <property type="match status" value="1"/>
</dbReference>
<dbReference type="FunFam" id="1.10.275.10:FF:000001">
    <property type="entry name" value="Fumarate hydratase, mitochondrial"/>
    <property type="match status" value="1"/>
</dbReference>
<dbReference type="FunFam" id="1.20.200.10:FF:000001">
    <property type="entry name" value="Fumarate hydratase, mitochondrial"/>
    <property type="match status" value="1"/>
</dbReference>
<dbReference type="Gene3D" id="1.10.40.30">
    <property type="entry name" value="Fumarase/aspartase (C-terminal domain)"/>
    <property type="match status" value="1"/>
</dbReference>
<dbReference type="Gene3D" id="1.20.200.10">
    <property type="entry name" value="Fumarase/aspartase (Central domain)"/>
    <property type="match status" value="1"/>
</dbReference>
<dbReference type="Gene3D" id="1.10.275.10">
    <property type="entry name" value="Fumarase/aspartase (N-terminal domain)"/>
    <property type="match status" value="1"/>
</dbReference>
<dbReference type="HAMAP" id="MF_00743">
    <property type="entry name" value="FumaraseC"/>
    <property type="match status" value="1"/>
</dbReference>
<dbReference type="InterPro" id="IPR005677">
    <property type="entry name" value="Fum_hydII"/>
</dbReference>
<dbReference type="InterPro" id="IPR024083">
    <property type="entry name" value="Fumarase/histidase_N"/>
</dbReference>
<dbReference type="InterPro" id="IPR018951">
    <property type="entry name" value="Fumarase_C_C"/>
</dbReference>
<dbReference type="InterPro" id="IPR020557">
    <property type="entry name" value="Fumarate_lyase_CS"/>
</dbReference>
<dbReference type="InterPro" id="IPR000362">
    <property type="entry name" value="Fumarate_lyase_fam"/>
</dbReference>
<dbReference type="InterPro" id="IPR022761">
    <property type="entry name" value="Fumarate_lyase_N"/>
</dbReference>
<dbReference type="InterPro" id="IPR008948">
    <property type="entry name" value="L-Aspartase-like"/>
</dbReference>
<dbReference type="NCBIfam" id="TIGR00979">
    <property type="entry name" value="fumC_II"/>
    <property type="match status" value="1"/>
</dbReference>
<dbReference type="NCBIfam" id="NF008909">
    <property type="entry name" value="PRK12273.1"/>
    <property type="match status" value="1"/>
</dbReference>
<dbReference type="PANTHER" id="PTHR11444">
    <property type="entry name" value="ASPARTATEAMMONIA/ARGININOSUCCINATE/ADENYLOSUCCINATE LYASE"/>
    <property type="match status" value="1"/>
</dbReference>
<dbReference type="PANTHER" id="PTHR11444:SF1">
    <property type="entry name" value="FUMARATE HYDRATASE, MITOCHONDRIAL"/>
    <property type="match status" value="1"/>
</dbReference>
<dbReference type="Pfam" id="PF10415">
    <property type="entry name" value="FumaraseC_C"/>
    <property type="match status" value="1"/>
</dbReference>
<dbReference type="Pfam" id="PF00206">
    <property type="entry name" value="Lyase_1"/>
    <property type="match status" value="1"/>
</dbReference>
<dbReference type="PRINTS" id="PR00145">
    <property type="entry name" value="ARGSUCLYASE"/>
</dbReference>
<dbReference type="PRINTS" id="PR00149">
    <property type="entry name" value="FUMRATELYASE"/>
</dbReference>
<dbReference type="SUPFAM" id="SSF48557">
    <property type="entry name" value="L-aspartase-like"/>
    <property type="match status" value="1"/>
</dbReference>
<dbReference type="PROSITE" id="PS00163">
    <property type="entry name" value="FUMARATE_LYASES"/>
    <property type="match status" value="1"/>
</dbReference>
<gene>
    <name evidence="1" type="primary">fumC</name>
    <name type="ordered locus">BRA0192</name>
    <name type="ordered locus">BS1330_II0189</name>
</gene>
<proteinExistence type="inferred from homology"/>
<organism>
    <name type="scientific">Brucella suis biovar 1 (strain 1330)</name>
    <dbReference type="NCBI Taxonomy" id="204722"/>
    <lineage>
        <taxon>Bacteria</taxon>
        <taxon>Pseudomonadati</taxon>
        <taxon>Pseudomonadota</taxon>
        <taxon>Alphaproteobacteria</taxon>
        <taxon>Hyphomicrobiales</taxon>
        <taxon>Brucellaceae</taxon>
        <taxon>Brucella/Ochrobactrum group</taxon>
        <taxon>Brucella</taxon>
    </lineage>
</organism>
<accession>Q8FX90</accession>
<accession>G0KF31</accession>
<protein>
    <recommendedName>
        <fullName evidence="1">Fumarate hydratase class II</fullName>
        <shortName evidence="1">Fumarase C</shortName>
        <ecNumber evidence="1">4.2.1.2</ecNumber>
    </recommendedName>
    <alternativeName>
        <fullName evidence="1">Aerobic fumarase</fullName>
    </alternativeName>
    <alternativeName>
        <fullName evidence="1">Iron-independent fumarase</fullName>
    </alternativeName>
</protein>
<sequence>MAATRTETDTFGPIDVPADRYWGAQTQRSLQNFRIGGERMPLPLVHALGVVKRAAAETNIALGKLDPVLGQVIAVAASEVIEGKLDDHFPLVVWQTGSGTQSNMNANEVISNRAIELLGGEMGSKKPIHPNDHVNMSQSSNDSFPTAIHIATAVETVNRLYPALEHLTKALKVKEEAFKDIIKIGRTHTQDATPVTLGQEFSGYRAALEYARHRLEQSLADVFLLAQGGTAVGTGLNAPVGFDKGFAEAVSEITGLSFKTAPNKFEALASHGAVLNFHGSLNALAADLFKIANDIRFLGSGPRSGLGELSLPENEPGSSIMPGKVNPTQAEAMTMVATQVFGNQTAVTVAASQGHFELNVFKPVIAYNVLQSIRLLSDTMVSFADHCVEGIEPNTARIKELLERSLMLVTALAPAIGYDNAARIAKTAHKNGTTLREEALASGLVSEEDYDRLVRAERMIAPQ</sequence>
<keyword id="KW-0963">Cytoplasm</keyword>
<keyword id="KW-0456">Lyase</keyword>
<keyword id="KW-0816">Tricarboxylic acid cycle</keyword>
<reference key="1">
    <citation type="journal article" date="2002" name="Proc. Natl. Acad. Sci. U.S.A.">
        <title>The Brucella suis genome reveals fundamental similarities between animal and plant pathogens and symbionts.</title>
        <authorList>
            <person name="Paulsen I.T."/>
            <person name="Seshadri R."/>
            <person name="Nelson K.E."/>
            <person name="Eisen J.A."/>
            <person name="Heidelberg J.F."/>
            <person name="Read T.D."/>
            <person name="Dodson R.J."/>
            <person name="Umayam L.A."/>
            <person name="Brinkac L.M."/>
            <person name="Beanan M.J."/>
            <person name="Daugherty S.C."/>
            <person name="DeBoy R.T."/>
            <person name="Durkin A.S."/>
            <person name="Kolonay J.F."/>
            <person name="Madupu R."/>
            <person name="Nelson W.C."/>
            <person name="Ayodeji B."/>
            <person name="Kraul M."/>
            <person name="Shetty J."/>
            <person name="Malek J.A."/>
            <person name="Van Aken S.E."/>
            <person name="Riedmuller S."/>
            <person name="Tettelin H."/>
            <person name="Gill S.R."/>
            <person name="White O."/>
            <person name="Salzberg S.L."/>
            <person name="Hoover D.L."/>
            <person name="Lindler L.E."/>
            <person name="Halling S.M."/>
            <person name="Boyle S.M."/>
            <person name="Fraser C.M."/>
        </authorList>
    </citation>
    <scope>NUCLEOTIDE SEQUENCE [LARGE SCALE GENOMIC DNA]</scope>
    <source>
        <strain>1330</strain>
    </source>
</reference>
<reference key="2">
    <citation type="journal article" date="2011" name="J. Bacteriol.">
        <title>Revised genome sequence of Brucella suis 1330.</title>
        <authorList>
            <person name="Tae H."/>
            <person name="Shallom S."/>
            <person name="Settlage R."/>
            <person name="Preston D."/>
            <person name="Adams L.G."/>
            <person name="Garner H.R."/>
        </authorList>
    </citation>
    <scope>NUCLEOTIDE SEQUENCE [LARGE SCALE GENOMIC DNA]</scope>
    <source>
        <strain>1330</strain>
    </source>
</reference>
<comment type="function">
    <text evidence="1">Involved in the TCA cycle. Catalyzes the stereospecific interconversion of fumarate to L-malate.</text>
</comment>
<comment type="catalytic activity">
    <reaction evidence="1">
        <text>(S)-malate = fumarate + H2O</text>
        <dbReference type="Rhea" id="RHEA:12460"/>
        <dbReference type="ChEBI" id="CHEBI:15377"/>
        <dbReference type="ChEBI" id="CHEBI:15589"/>
        <dbReference type="ChEBI" id="CHEBI:29806"/>
        <dbReference type="EC" id="4.2.1.2"/>
    </reaction>
</comment>
<comment type="pathway">
    <text evidence="1">Carbohydrate metabolism; tricarboxylic acid cycle; (S)-malate from fumarate: step 1/1.</text>
</comment>
<comment type="subunit">
    <text evidence="1">Homotetramer.</text>
</comment>
<comment type="subcellular location">
    <subcellularLocation>
        <location evidence="1">Cytoplasm</location>
    </subcellularLocation>
</comment>
<comment type="miscellaneous">
    <text evidence="1">There are 2 substrate-binding sites: the catalytic A site, and the non-catalytic B site that may play a role in the transfer of substrate or product between the active site and the solvent. Alternatively, the B site may bind allosteric effectors.</text>
</comment>
<comment type="similarity">
    <text evidence="1">Belongs to the class-II fumarase/aspartase family. Fumarase subfamily.</text>
</comment>